<sequence length="423" mass="48587">MSASAVYVLDLKGKVLICRNYRGDVDMSEVEHFMPILMEKEEEGMLSPILAHGGVRFMWIKHNNLYLVATSKKNACVSLVFSFLYKVVQVFSEYFKELEEESIRDNFVIIYELLDELMDFGYPQTTDSKILQEYITQEGHKLETGAPRPPATVTNAVSWRSEGIKYRKNEVFLDVIESVNLLVSANGNVLRSEIVGSIKMRVFLSGMPELRLGLNDKVLFDNTGRGKSKSVELEDVKFHQCVRLSRFENDRTISFIPPDGEFELMSYRLNTHVKPLIWIESVIEKHSHSRIEYMIKAKSQFKRRSTANNVEIHIPVPNDADSPKFKTTVGSVKWVPENSEIVWSIKSFPGGKEYLMRAHFGLPSVEAEDKEGKPPISVKFEIPYFTTSGIQVRYLKIIEKSGYQALPWVRYITQNGDYQLRTQ</sequence>
<protein>
    <recommendedName>
        <fullName>AP-1 complex subunit mu-1</fullName>
    </recommendedName>
    <alternativeName>
        <fullName>AP-mu chain family member mu1A</fullName>
    </alternativeName>
    <alternativeName>
        <fullName>Adaptor protein complex AP-1 subunit mu-1</fullName>
    </alternativeName>
    <alternativeName>
        <fullName>Adaptor-related protein complex 1 subunit mu-1</fullName>
    </alternativeName>
    <alternativeName>
        <fullName>Clathrin assembly protein complex 1 mu-1 medium chain 1</fullName>
    </alternativeName>
    <alternativeName>
        <fullName>Clathrin coat assembly protein AP47</fullName>
    </alternativeName>
    <alternativeName>
        <fullName>Clathrin coat-associated protein AP47</fullName>
    </alternativeName>
    <alternativeName>
        <fullName>Golgi adaptor HA1/AP1 adaptin mu-1 subunit</fullName>
    </alternativeName>
    <alternativeName>
        <fullName>Mu-adaptin 1</fullName>
    </alternativeName>
    <alternativeName>
        <fullName>Mu1A-adaptin</fullName>
    </alternativeName>
</protein>
<keyword id="KW-0007">Acetylation</keyword>
<keyword id="KW-0025">Alternative splicing</keyword>
<keyword id="KW-0968">Cytoplasmic vesicle</keyword>
<keyword id="KW-0903">Direct protein sequencing</keyword>
<keyword id="KW-0333">Golgi apparatus</keyword>
<keyword id="KW-0945">Host-virus interaction</keyword>
<keyword id="KW-0472">Membrane</keyword>
<keyword id="KW-0597">Phosphoprotein</keyword>
<keyword id="KW-0653">Protein transport</keyword>
<keyword id="KW-1267">Proteomics identification</keyword>
<keyword id="KW-1185">Reference proteome</keyword>
<keyword id="KW-0813">Transport</keyword>
<gene>
    <name type="primary">AP1M1</name>
    <name type="synonym">CLTNM</name>
</gene>
<comment type="function">
    <text>Subunit of clathrin-associated adaptor protein complex 1 that plays a role in protein sorting in the trans-Golgi network (TGN) and endosomes. The AP complexes mediate the recruitment of clathrin to membranes and the recognition of sorting signals within the cytosolic tails of transmembrane cargo molecules.</text>
</comment>
<comment type="subunit">
    <text evidence="1 5">Adaptor protein complex 1 (AP-1) is a heterotetramer composed of two large adaptins (gamma-type subunit AP1G1 and beta-type subunit AP1B1), a medium adaptin (mu-type subunit AP1M1 or AP1M2) and a small adaptin (sigma-type subunit AP1S1 or AP1S2 or AP1S3). Interacts with MARCHF11 (By similarity). Associates with the AP1(MU)-Nef-MHC-I complex; this complex is required for MHC-I internalization.</text>
</comment>
<comment type="subunit">
    <text evidence="5">(Microbial infection) Interacts with HIV-1 Nef.</text>
</comment>
<comment type="interaction">
    <interactant intactId="EBI-541426">
        <id>Q9BXS5</id>
    </interactant>
    <interactant intactId="EBI-17286414">
        <id>A2BDD9</id>
        <label>AMOT</label>
    </interactant>
    <organismsDiffer>false</organismsDiffer>
    <experiments>3</experiments>
</comment>
<comment type="interaction">
    <interactant intactId="EBI-541426">
        <id>Q9BXS5</id>
    </interactant>
    <interactant intactId="EBI-432924">
        <id>P63010</id>
        <label>AP2B1</label>
    </interactant>
    <organismsDiffer>false</organismsDiffer>
    <experiments>4</experiments>
</comment>
<comment type="interaction">
    <interactant intactId="EBI-541426">
        <id>Q9BXS5</id>
    </interactant>
    <interactant intactId="EBI-12248874">
        <id>A0A0C4DG62</id>
        <label>ARL6IP4</label>
    </interactant>
    <organismsDiffer>false</organismsDiffer>
    <experiments>3</experiments>
</comment>
<comment type="interaction">
    <interactant intactId="EBI-541426">
        <id>Q9BXS5</id>
    </interactant>
    <interactant intactId="EBI-765971">
        <id>Q9HBZ2</id>
        <label>ARNT2</label>
    </interactant>
    <organismsDiffer>false</organismsDiffer>
    <experiments>3</experiments>
</comment>
<comment type="interaction">
    <interactant intactId="EBI-541426">
        <id>Q9BXS5</id>
    </interactant>
    <interactant intactId="EBI-492498">
        <id>P18848</id>
        <label>ATF4</label>
    </interactant>
    <organismsDiffer>false</organismsDiffer>
    <experiments>3</experiments>
</comment>
<comment type="interaction">
    <interactant intactId="EBI-541426">
        <id>Q9BXS5</id>
    </interactant>
    <interactant intactId="EBI-4400025">
        <id>Q9Y2T1</id>
        <label>AXIN2</label>
    </interactant>
    <organismsDiffer>false</organismsDiffer>
    <experiments>3</experiments>
</comment>
<comment type="interaction">
    <interactant intactId="EBI-541426">
        <id>Q9BXS5</id>
    </interactant>
    <interactant intactId="EBI-1642333">
        <id>Q9BYV9</id>
        <label>BACH2</label>
    </interactant>
    <organismsDiffer>false</organismsDiffer>
    <experiments>3</experiments>
</comment>
<comment type="interaction">
    <interactant intactId="EBI-541426">
        <id>Q9BXS5</id>
    </interactant>
    <interactant intactId="EBI-702336">
        <id>O75815</id>
        <label>BCAR3</label>
    </interactant>
    <organismsDiffer>false</organismsDiffer>
    <experiments>3</experiments>
</comment>
<comment type="interaction">
    <interactant intactId="EBI-541426">
        <id>Q9BXS5</id>
    </interactant>
    <interactant intactId="EBI-12861768">
        <id>Q6NVI2</id>
        <label>CASP8</label>
    </interactant>
    <organismsDiffer>false</organismsDiffer>
    <experiments>3</experiments>
</comment>
<comment type="interaction">
    <interactant intactId="EBI-541426">
        <id>Q9BXS5</id>
    </interactant>
    <interactant intactId="EBI-10181988">
        <id>Q8IYX8-2</id>
        <label>CEP57L1</label>
    </interactant>
    <organismsDiffer>false</organismsDiffer>
    <experiments>3</experiments>
</comment>
<comment type="interaction">
    <interactant intactId="EBI-541426">
        <id>Q9BXS5</id>
    </interactant>
    <interactant intactId="EBI-11988027">
        <id>Q9NRI5-2</id>
        <label>DISC1</label>
    </interactant>
    <organismsDiffer>false</organismsDiffer>
    <experiments>3</experiments>
</comment>
<comment type="interaction">
    <interactant intactId="EBI-541426">
        <id>Q9BXS5</id>
    </interactant>
    <interactant intactId="EBI-948630">
        <id>Q86Y13</id>
        <label>DZIP3</label>
    </interactant>
    <organismsDiffer>false</organismsDiffer>
    <experiments>3</experiments>
</comment>
<comment type="interaction">
    <interactant intactId="EBI-541426">
        <id>Q9BXS5</id>
    </interactant>
    <interactant intactId="EBI-743414">
        <id>O95967</id>
        <label>EFEMP2</label>
    </interactant>
    <organismsDiffer>false</organismsDiffer>
    <experiments>3</experiments>
</comment>
<comment type="interaction">
    <interactant intactId="EBI-541426">
        <id>Q9BXS5</id>
    </interactant>
    <interactant intactId="EBI-10178036">
        <id>Q96C92-2</id>
        <label>ENTR1</label>
    </interactant>
    <organismsDiffer>false</organismsDiffer>
    <experiments>3</experiments>
</comment>
<comment type="interaction">
    <interactant intactId="EBI-541426">
        <id>Q9BXS5</id>
    </interactant>
    <interactant intactId="EBI-1372759">
        <id>P41212</id>
        <label>ETV6</label>
    </interactant>
    <organismsDiffer>false</organismsDiffer>
    <experiments>3</experiments>
</comment>
<comment type="interaction">
    <interactant intactId="EBI-541426">
        <id>Q9BXS5</id>
    </interactant>
    <interactant intactId="EBI-749523">
        <id>Q96CN4</id>
        <label>EVI5L</label>
    </interactant>
    <organismsDiffer>false</organismsDiffer>
    <experiments>3</experiments>
</comment>
<comment type="interaction">
    <interactant intactId="EBI-541426">
        <id>Q9BXS5</id>
    </interactant>
    <interactant intactId="EBI-12290965">
        <id>Q5XKK7</id>
        <label>FAM219B</label>
    </interactant>
    <organismsDiffer>false</organismsDiffer>
    <experiments>3</experiments>
</comment>
<comment type="interaction">
    <interactant intactId="EBI-541426">
        <id>Q9BXS5</id>
    </interactant>
    <interactant intactId="EBI-10175124">
        <id>Q8IZU0</id>
        <label>FAM9B</label>
    </interactant>
    <organismsDiffer>false</organismsDiffer>
    <experiments>3</experiments>
</comment>
<comment type="interaction">
    <interactant intactId="EBI-541426">
        <id>Q9BXS5</id>
    </interactant>
    <interactant intactId="EBI-3918971">
        <id>Q9Y680</id>
        <label>FKBP7</label>
    </interactant>
    <organismsDiffer>false</organismsDiffer>
    <experiments>3</experiments>
</comment>
<comment type="interaction">
    <interactant intactId="EBI-541426">
        <id>Q9BXS5</id>
    </interactant>
    <interactant intactId="EBI-11022345">
        <id>P51114-2</id>
        <label>FXR1</label>
    </interactant>
    <organismsDiffer>false</organismsDiffer>
    <experiments>5</experiments>
</comment>
<comment type="interaction">
    <interactant intactId="EBI-541426">
        <id>Q9BXS5</id>
    </interactant>
    <interactant intactId="EBI-740459">
        <id>P51116</id>
        <label>FXR2</label>
    </interactant>
    <organismsDiffer>false</organismsDiffer>
    <experiments>7</experiments>
</comment>
<comment type="interaction">
    <interactant intactId="EBI-541426">
        <id>Q9BXS5</id>
    </interactant>
    <interactant intactId="EBI-10267082">
        <id>Q8N6F7</id>
        <label>GCSAM</label>
    </interactant>
    <organismsDiffer>false</organismsDiffer>
    <experiments>3</experiments>
</comment>
<comment type="interaction">
    <interactant intactId="EBI-541426">
        <id>Q9BXS5</id>
    </interactant>
    <interactant intactId="EBI-743290">
        <id>Q96ED9</id>
        <label>HOOK2</label>
    </interactant>
    <organismsDiffer>false</organismsDiffer>
    <experiments>3</experiments>
</comment>
<comment type="interaction">
    <interactant intactId="EBI-541426">
        <id>Q9BXS5</id>
    </interactant>
    <interactant intactId="EBI-10961706">
        <id>Q96ED9-2</id>
        <label>HOOK2</label>
    </interactant>
    <organismsDiffer>false</organismsDiffer>
    <experiments>3</experiments>
</comment>
<comment type="interaction">
    <interactant intactId="EBI-541426">
        <id>Q9BXS5</id>
    </interactant>
    <interactant intactId="EBI-745305">
        <id>Q13422</id>
        <label>IKZF1</label>
    </interactant>
    <organismsDiffer>false</organismsDiffer>
    <experiments>3</experiments>
</comment>
<comment type="interaction">
    <interactant intactId="EBI-541426">
        <id>Q9BXS5</id>
    </interactant>
    <interactant intactId="EBI-11522367">
        <id>Q13422-7</id>
        <label>IKZF1</label>
    </interactant>
    <organismsDiffer>false</organismsDiffer>
    <experiments>3</experiments>
</comment>
<comment type="interaction">
    <interactant intactId="EBI-541426">
        <id>Q9BXS5</id>
    </interactant>
    <interactant intactId="EBI-10213781">
        <id>Q5T7B8-2</id>
        <label>KIF24</label>
    </interactant>
    <organismsDiffer>false</organismsDiffer>
    <experiments>3</experiments>
</comment>
<comment type="interaction">
    <interactant intactId="EBI-541426">
        <id>Q9BXS5</id>
    </interactant>
    <interactant intactId="EBI-10171697">
        <id>Q6A162</id>
        <label>KRT40</label>
    </interactant>
    <organismsDiffer>false</organismsDiffer>
    <experiments>6</experiments>
</comment>
<comment type="interaction">
    <interactant intactId="EBI-541426">
        <id>Q9BXS5</id>
    </interactant>
    <interactant intactId="EBI-10172290">
        <id>P60409</id>
        <label>KRTAP10-7</label>
    </interactant>
    <organismsDiffer>false</organismsDiffer>
    <experiments>6</experiments>
</comment>
<comment type="interaction">
    <interactant intactId="EBI-541426">
        <id>Q9BXS5</id>
    </interactant>
    <interactant intactId="EBI-10171774">
        <id>P60410</id>
        <label>KRTAP10-8</label>
    </interactant>
    <organismsDiffer>false</organismsDiffer>
    <experiments>3</experiments>
</comment>
<comment type="interaction">
    <interactant intactId="EBI-541426">
        <id>Q9BXS5</id>
    </interactant>
    <interactant intactId="EBI-740738">
        <id>O95751</id>
        <label>LDOC1</label>
    </interactant>
    <organismsDiffer>false</organismsDiffer>
    <experiments>6</experiments>
</comment>
<comment type="interaction">
    <interactant intactId="EBI-541426">
        <id>Q9BXS5</id>
    </interactant>
    <interactant intactId="EBI-739832">
        <id>Q8TBB1</id>
        <label>LNX1</label>
    </interactant>
    <organismsDiffer>false</organismsDiffer>
    <experiments>3</experiments>
</comment>
<comment type="interaction">
    <interactant intactId="EBI-541426">
        <id>Q9BXS5</id>
    </interactant>
    <interactant intactId="EBI-9057780">
        <id>Q96KN1</id>
        <label>LRATD2</label>
    </interactant>
    <organismsDiffer>false</organismsDiffer>
    <experiments>3</experiments>
</comment>
<comment type="interaction">
    <interactant intactId="EBI-541426">
        <id>Q9BXS5</id>
    </interactant>
    <interactant intactId="EBI-18393842">
        <id>A0A087WWI0</id>
        <label>LRMDA</label>
    </interactant>
    <organismsDiffer>false</organismsDiffer>
    <experiments>3</experiments>
</comment>
<comment type="interaction">
    <interactant intactId="EBI-541426">
        <id>Q9BXS5</id>
    </interactant>
    <interactant intactId="EBI-1216080">
        <id>Q9Y250</id>
        <label>LZTS1</label>
    </interactant>
    <organismsDiffer>false</organismsDiffer>
    <experiments>3</experiments>
</comment>
<comment type="interaction">
    <interactant intactId="EBI-541426">
        <id>Q9BXS5</id>
    </interactant>
    <interactant intactId="EBI-741037">
        <id>Q9BRK4</id>
        <label>LZTS2</label>
    </interactant>
    <organismsDiffer>false</organismsDiffer>
    <experiments>3</experiments>
</comment>
<comment type="interaction">
    <interactant intactId="EBI-541426">
        <id>Q9BXS5</id>
    </interactant>
    <interactant intactId="EBI-722444">
        <id>P21741</id>
        <label>MDK</label>
    </interactant>
    <organismsDiffer>false</organismsDiffer>
    <experiments>3</experiments>
</comment>
<comment type="interaction">
    <interactant intactId="EBI-541426">
        <id>Q9BXS5</id>
    </interactant>
    <interactant intactId="EBI-744921">
        <id>Q16626</id>
        <label>MEA1</label>
    </interactant>
    <organismsDiffer>false</organismsDiffer>
    <experiments>5</experiments>
</comment>
<comment type="interaction">
    <interactant intactId="EBI-541426">
        <id>Q9BXS5</id>
    </interactant>
    <interactant intactId="EBI-10172526">
        <id>Q9UJV3-2</id>
        <label>MID2</label>
    </interactant>
    <organismsDiffer>false</organismsDiffer>
    <experiments>3</experiments>
</comment>
<comment type="interaction">
    <interactant intactId="EBI-541426">
        <id>Q9BXS5</id>
    </interactant>
    <interactant intactId="EBI-747024">
        <id>Q14872</id>
        <label>MTF1</label>
    </interactant>
    <organismsDiffer>false</organismsDiffer>
    <experiments>3</experiments>
</comment>
<comment type="interaction">
    <interactant intactId="EBI-541426">
        <id>Q9BXS5</id>
    </interactant>
    <interactant intactId="EBI-488878">
        <id>P15172</id>
        <label>MYOD1</label>
    </interactant>
    <organismsDiffer>false</organismsDiffer>
    <experiments>3</experiments>
</comment>
<comment type="interaction">
    <interactant intactId="EBI-541426">
        <id>Q9BXS5</id>
    </interactant>
    <interactant intactId="EBI-11956853">
        <id>Q8N987</id>
        <label>NECAB1</label>
    </interactant>
    <organismsDiffer>false</organismsDiffer>
    <experiments>3</experiments>
</comment>
<comment type="interaction">
    <interactant intactId="EBI-541426">
        <id>Q9BXS5</id>
    </interactant>
    <interactant intactId="EBI-721539">
        <id>Q8N5F7</id>
        <label>NKAP</label>
    </interactant>
    <organismsDiffer>false</organismsDiffer>
    <experiments>3</experiments>
</comment>
<comment type="interaction">
    <interactant intactId="EBI-541426">
        <id>Q9BXS5</id>
    </interactant>
    <interactant intactId="EBI-3920396">
        <id>Q6ZUT1</id>
        <label>NKAPD1</label>
    </interactant>
    <organismsDiffer>false</organismsDiffer>
    <experiments>3</experiments>
</comment>
<comment type="interaction">
    <interactant intactId="EBI-541426">
        <id>Q9BXS5</id>
    </interactant>
    <interactant intactId="EBI-10225049">
        <id>Q7RTU3</id>
        <label>OLIG3</label>
    </interactant>
    <organismsDiffer>false</organismsDiffer>
    <experiments>3</experiments>
</comment>
<comment type="interaction">
    <interactant intactId="EBI-541426">
        <id>Q9BXS5</id>
    </interactant>
    <interactant intactId="EBI-747278">
        <id>P26367</id>
        <label>PAX6</label>
    </interactant>
    <organismsDiffer>false</organismsDiffer>
    <experiments>3</experiments>
</comment>
<comment type="interaction">
    <interactant intactId="EBI-541426">
        <id>Q9BXS5</id>
    </interactant>
    <interactant intactId="EBI-713786">
        <id>Q8IXK0</id>
        <label>PHC2</label>
    </interactant>
    <organismsDiffer>false</organismsDiffer>
    <experiments>3</experiments>
</comment>
<comment type="interaction">
    <interactant intactId="EBI-541426">
        <id>Q9BXS5</id>
    </interactant>
    <interactant intactId="EBI-79165">
        <id>Q9NRD5</id>
        <label>PICK1</label>
    </interactant>
    <organismsDiffer>false</organismsDiffer>
    <experiments>3</experiments>
</comment>
<comment type="interaction">
    <interactant intactId="EBI-541426">
        <id>Q9BXS5</id>
    </interactant>
    <interactant intactId="EBI-10171633">
        <id>Q96PV4</id>
        <label>PNMA5</label>
    </interactant>
    <organismsDiffer>false</organismsDiffer>
    <experiments>3</experiments>
</comment>
<comment type="interaction">
    <interactant intactId="EBI-541426">
        <id>Q9BXS5</id>
    </interactant>
    <interactant intactId="EBI-2880222">
        <id>Q96QR8</id>
        <label>PURB</label>
    </interactant>
    <organismsDiffer>false</organismsDiffer>
    <experiments>3</experiments>
</comment>
<comment type="interaction">
    <interactant intactId="EBI-541426">
        <id>Q9BXS5</id>
    </interactant>
    <interactant intactId="EBI-2466594">
        <id>Q6ZMZ0</id>
        <label>RNF19B</label>
    </interactant>
    <organismsDiffer>false</organismsDiffer>
    <experiments>5</experiments>
</comment>
<comment type="interaction">
    <interactant intactId="EBI-541426">
        <id>Q9BXS5</id>
    </interactant>
    <interactant intactId="EBI-1378139">
        <id>Q9HAT0</id>
        <label>ROPN1</label>
    </interactant>
    <organismsDiffer>false</organismsDiffer>
    <experiments>3</experiments>
</comment>
<comment type="interaction">
    <interactant intactId="EBI-541426">
        <id>Q9BXS5</id>
    </interactant>
    <interactant intactId="EBI-630339">
        <id>Q8TA86</id>
        <label>RP9</label>
    </interactant>
    <organismsDiffer>false</organismsDiffer>
    <experiments>3</experiments>
</comment>
<comment type="interaction">
    <interactant intactId="EBI-541426">
        <id>Q9BXS5</id>
    </interactant>
    <interactant intactId="EBI-748350">
        <id>Q9UHP6</id>
        <label>RSPH14</label>
    </interactant>
    <organismsDiffer>false</organismsDiffer>
    <experiments>6</experiments>
</comment>
<comment type="interaction">
    <interactant intactId="EBI-541426">
        <id>Q9BXS5</id>
    </interactant>
    <interactant intactId="EBI-747225">
        <id>Q59EK9</id>
        <label>RUNDC3A</label>
    </interactant>
    <organismsDiffer>false</organismsDiffer>
    <experiments>4</experiments>
</comment>
<comment type="interaction">
    <interactant intactId="EBI-541426">
        <id>Q9BXS5</id>
    </interactant>
    <interactant intactId="EBI-11957366">
        <id>Q59EK9-3</id>
        <label>RUNDC3A</label>
    </interactant>
    <organismsDiffer>false</organismsDiffer>
    <experiments>3</experiments>
</comment>
<comment type="interaction">
    <interactant intactId="EBI-541426">
        <id>Q9BXS5</id>
    </interactant>
    <interactant intactId="EBI-742426">
        <id>Q9H190</id>
        <label>SDCBP2</label>
    </interactant>
    <organismsDiffer>false</organismsDiffer>
    <experiments>3</experiments>
</comment>
<comment type="interaction">
    <interactant intactId="EBI-541426">
        <id>Q9BXS5</id>
    </interactant>
    <interactant intactId="EBI-10198587">
        <id>Q02446</id>
        <label>SP4</label>
    </interactant>
    <organismsDiffer>false</organismsDiffer>
    <experiments>3</experiments>
</comment>
<comment type="interaction">
    <interactant intactId="EBI-541426">
        <id>Q9BXS5</id>
    </interactant>
    <interactant intactId="EBI-17860101">
        <id>Q9NWH7-2</id>
        <label>SPATA6</label>
    </interactant>
    <organismsDiffer>false</organismsDiffer>
    <experiments>3</experiments>
</comment>
<comment type="interaction">
    <interactant intactId="EBI-541426">
        <id>Q9BXS5</id>
    </interactant>
    <interactant intactId="EBI-2212028">
        <id>Q9Y2D8</id>
        <label>SSX2IP</label>
    </interactant>
    <organismsDiffer>false</organismsDiffer>
    <experiments>3</experiments>
</comment>
<comment type="interaction">
    <interactant intactId="EBI-541426">
        <id>Q9BXS5</id>
    </interactant>
    <interactant intactId="EBI-11139477">
        <id>Q96N21</id>
        <label>TEPSIN</label>
    </interactant>
    <organismsDiffer>false</organismsDiffer>
    <experiments>3</experiments>
</comment>
<comment type="interaction">
    <interactant intactId="EBI-541426">
        <id>Q9BXS5</id>
    </interactant>
    <interactant intactId="EBI-1105213">
        <id>Q9UBB9</id>
        <label>TFIP11</label>
    </interactant>
    <organismsDiffer>false</organismsDiffer>
    <experiments>3</experiments>
</comment>
<comment type="interaction">
    <interactant intactId="EBI-541426">
        <id>Q9BXS5</id>
    </interactant>
    <interactant intactId="EBI-3925505">
        <id>Q8TBB0</id>
        <label>THAP6</label>
    </interactant>
    <organismsDiffer>false</organismsDiffer>
    <experiments>3</experiments>
</comment>
<comment type="interaction">
    <interactant intactId="EBI-541426">
        <id>Q9BXS5</id>
    </interactant>
    <interactant intactId="EBI-740711">
        <id>Q96CG3</id>
        <label>TIFA</label>
    </interactant>
    <organismsDiffer>false</organismsDiffer>
    <experiments>7</experiments>
</comment>
<comment type="interaction">
    <interactant intactId="EBI-541426">
        <id>Q9BXS5</id>
    </interactant>
    <interactant intactId="EBI-357849">
        <id>Q15025</id>
        <label>TNIP1</label>
    </interactant>
    <organismsDiffer>false</organismsDiffer>
    <experiments>3</experiments>
</comment>
<comment type="interaction">
    <interactant intactId="EBI-541426">
        <id>Q9BXS5</id>
    </interactant>
    <interactant intactId="EBI-719493">
        <id>P14373</id>
        <label>TRIM27</label>
    </interactant>
    <organismsDiffer>false</organismsDiffer>
    <experiments>3</experiments>
</comment>
<comment type="interaction">
    <interactant intactId="EBI-541426">
        <id>Q9BXS5</id>
    </interactant>
    <interactant intactId="EBI-725997">
        <id>Q8WV44</id>
        <label>TRIM41</label>
    </interactant>
    <organismsDiffer>false</organismsDiffer>
    <experiments>3</experiments>
</comment>
<comment type="interaction">
    <interactant intactId="EBI-541426">
        <id>Q9BXS5</id>
    </interactant>
    <interactant intactId="EBI-10176632">
        <id>O43829</id>
        <label>ZBTB14</label>
    </interactant>
    <organismsDiffer>false</organismsDiffer>
    <experiments>6</experiments>
</comment>
<comment type="interaction">
    <interactant intactId="EBI-541426">
        <id>Q9BXS5</id>
    </interactant>
    <interactant intactId="EBI-7229473">
        <id>Q9H5J0</id>
        <label>ZBTB3</label>
    </interactant>
    <organismsDiffer>false</organismsDiffer>
    <experiments>3</experiments>
</comment>
<comment type="interaction">
    <interactant intactId="EBI-541426">
        <id>Q9BXS5</id>
    </interactant>
    <interactant intactId="EBI-740718">
        <id>O43298</id>
        <label>ZBTB43</label>
    </interactant>
    <organismsDiffer>false</organismsDiffer>
    <experiments>6</experiments>
</comment>
<comment type="interaction">
    <interactant intactId="EBI-541426">
        <id>Q9BXS5</id>
    </interactant>
    <interactant intactId="EBI-5658292">
        <id>Q8NCP5</id>
        <label>ZBTB44</label>
    </interactant>
    <organismsDiffer>false</organismsDiffer>
    <experiments>3</experiments>
</comment>
<comment type="interaction">
    <interactant intactId="EBI-541426">
        <id>Q9BXS5</id>
    </interactant>
    <interactant intactId="EBI-742740">
        <id>Q96BR9</id>
        <label>ZBTB8A</label>
    </interactant>
    <organismsDiffer>false</organismsDiffer>
    <experiments>7</experiments>
</comment>
<comment type="interaction">
    <interactant intactId="EBI-541426">
        <id>Q9BXS5</id>
    </interactant>
    <interactant intactId="EBI-746345">
        <id>Q9NP64</id>
        <label>ZCCHC17</label>
    </interactant>
    <organismsDiffer>false</organismsDiffer>
    <experiments>7</experiments>
</comment>
<comment type="interaction">
    <interactant intactId="EBI-541426">
        <id>Q9BXS5</id>
    </interactant>
    <interactant intactId="EBI-12884200">
        <id>P17023</id>
        <label>ZNF19</label>
    </interactant>
    <organismsDiffer>false</organismsDiffer>
    <experiments>3</experiments>
</comment>
<comment type="interaction">
    <interactant intactId="EBI-541426">
        <id>Q9BXS5</id>
    </interactant>
    <interactant intactId="EBI-3937106">
        <id>Q9P2Y4</id>
        <label>ZNF219</label>
    </interactant>
    <organismsDiffer>false</organismsDiffer>
    <experiments>3</experiments>
</comment>
<comment type="interaction">
    <interactant intactId="EBI-541426">
        <id>Q9BXS5</id>
    </interactant>
    <interactant intactId="EBI-750821">
        <id>Q8N554</id>
        <label>ZNF276</label>
    </interactant>
    <organismsDiffer>false</organismsDiffer>
    <experiments>3</experiments>
</comment>
<comment type="interaction">
    <interactant intactId="EBI-541426">
        <id>Q9BXS5</id>
    </interactant>
    <interactant intactId="EBI-2555731">
        <id>Q9H707</id>
        <label>ZNF552</label>
    </interactant>
    <organismsDiffer>false</organismsDiffer>
    <experiments>3</experiments>
</comment>
<comment type="interaction">
    <interactant intactId="EBI-541426">
        <id>Q9BXS5</id>
    </interactant>
    <interactant intactId="EBI-625509">
        <id>Q8N720</id>
        <label>ZNF655</label>
    </interactant>
    <organismsDiffer>false</organismsDiffer>
    <experiments>3</experiments>
</comment>
<comment type="interaction">
    <interactant intactId="EBI-541426">
        <id>Q9BXS5</id>
    </interactant>
    <interactant intactId="EBI-2555757">
        <id>P17098</id>
        <label>ZNF8</label>
    </interactant>
    <organismsDiffer>false</organismsDiffer>
    <experiments>3</experiments>
</comment>
<comment type="interaction">
    <interactant intactId="EBI-541426">
        <id>Q9BXS5</id>
    </interactant>
    <interactant intactId="EBI-527853">
        <id>Q9UGI0</id>
        <label>ZRANB1</label>
    </interactant>
    <organismsDiffer>false</organismsDiffer>
    <experiments>3</experiments>
</comment>
<comment type="interaction">
    <interactant intactId="EBI-541426">
        <id>Q9BXS5</id>
    </interactant>
    <interactant intactId="EBI-723596">
        <id>Q9H4T2</id>
        <label>ZSCAN16</label>
    </interactant>
    <organismsDiffer>false</organismsDiffer>
    <experiments>3</experiments>
</comment>
<comment type="subcellular location">
    <subcellularLocation>
        <location>Golgi apparatus</location>
    </subcellularLocation>
    <subcellularLocation>
        <location>Cytoplasmic vesicle</location>
        <location>Clathrin-coated vesicle membrane</location>
        <topology>Peripheral membrane protein</topology>
        <orientation>Cytoplasmic side</orientation>
    </subcellularLocation>
    <text>Component of the coat surrounding the cytoplasmic face of coated vesicles located at the Golgi complex.</text>
</comment>
<comment type="alternative products">
    <event type="alternative splicing"/>
    <isoform>
        <id>Q9BXS5-1</id>
        <name>1</name>
        <sequence type="displayed"/>
    </isoform>
    <isoform>
        <id>Q9BXS5-2</id>
        <name>2</name>
        <sequence type="described" ref="VSP_042542"/>
    </isoform>
</comment>
<comment type="PTM">
    <text evidence="1">Phosphorylation of membrane-bound AP1M1/AP1M2 increases its affinity for sorting signals.</text>
</comment>
<comment type="similarity">
    <text evidence="8">Belongs to the adaptor complexes medium subunit family.</text>
</comment>
<name>AP1M1_HUMAN</name>
<organism>
    <name type="scientific">Homo sapiens</name>
    <name type="common">Human</name>
    <dbReference type="NCBI Taxonomy" id="9606"/>
    <lineage>
        <taxon>Eukaryota</taxon>
        <taxon>Metazoa</taxon>
        <taxon>Chordata</taxon>
        <taxon>Craniata</taxon>
        <taxon>Vertebrata</taxon>
        <taxon>Euteleostomi</taxon>
        <taxon>Mammalia</taxon>
        <taxon>Eutheria</taxon>
        <taxon>Euarchontoglires</taxon>
        <taxon>Primates</taxon>
        <taxon>Haplorrhini</taxon>
        <taxon>Catarrhini</taxon>
        <taxon>Hominidae</taxon>
        <taxon>Homo</taxon>
    </lineage>
</organism>
<dbReference type="EMBL" id="AF290613">
    <property type="protein sequence ID" value="AAK28024.1"/>
    <property type="molecule type" value="mRNA"/>
</dbReference>
<dbReference type="EMBL" id="DQ059565">
    <property type="protein sequence ID" value="AAY54246.1"/>
    <property type="molecule type" value="mRNA"/>
</dbReference>
<dbReference type="EMBL" id="AC020911">
    <property type="status" value="NOT_ANNOTATED_CDS"/>
    <property type="molecule type" value="Genomic_DNA"/>
</dbReference>
<dbReference type="EMBL" id="BC017469">
    <property type="protein sequence ID" value="AAH17469.1"/>
    <property type="molecule type" value="mRNA"/>
</dbReference>
<dbReference type="CCDS" id="CCDS12342.1">
    <molecule id="Q9BXS5-1"/>
</dbReference>
<dbReference type="CCDS" id="CCDS46008.1">
    <molecule id="Q9BXS5-2"/>
</dbReference>
<dbReference type="RefSeq" id="NP_001123996.1">
    <molecule id="Q9BXS5-2"/>
    <property type="nucleotide sequence ID" value="NM_001130524.2"/>
</dbReference>
<dbReference type="RefSeq" id="NP_115882.1">
    <molecule id="Q9BXS5-1"/>
    <property type="nucleotide sequence ID" value="NM_032493.4"/>
</dbReference>
<dbReference type="SMR" id="Q9BXS5"/>
<dbReference type="BioGRID" id="114421">
    <property type="interactions" value="232"/>
</dbReference>
<dbReference type="ComplexPortal" id="CPX-5047">
    <property type="entry name" value="Ubiquitous AP-1 Adaptor complex, sigma1a variant"/>
</dbReference>
<dbReference type="ComplexPortal" id="CPX-5048">
    <property type="entry name" value="Ubiquitous AP-1 Adaptor complex, sigma1b variant"/>
</dbReference>
<dbReference type="ComplexPortal" id="CPX-5049">
    <property type="entry name" value="Ubiquitous AP-1 Adaptor complex, sigma1c variant"/>
</dbReference>
<dbReference type="CORUM" id="Q9BXS5"/>
<dbReference type="FunCoup" id="Q9BXS5">
    <property type="interactions" value="2793"/>
</dbReference>
<dbReference type="IntAct" id="Q9BXS5">
    <property type="interactions" value="128"/>
</dbReference>
<dbReference type="MINT" id="Q9BXS5"/>
<dbReference type="STRING" id="9606.ENSP00000388996"/>
<dbReference type="TCDB" id="9.B.278.1.1">
    <property type="family name" value="the organellar-targeting adaptor protein complex (o-apc) family"/>
</dbReference>
<dbReference type="GlyCosmos" id="Q9BXS5">
    <property type="glycosylation" value="1 site, 2 glycans"/>
</dbReference>
<dbReference type="GlyGen" id="Q9BXS5">
    <property type="glycosylation" value="1 site, 2 O-linked glycans (1 site)"/>
</dbReference>
<dbReference type="iPTMnet" id="Q9BXS5"/>
<dbReference type="PhosphoSitePlus" id="Q9BXS5"/>
<dbReference type="SwissPalm" id="Q9BXS5"/>
<dbReference type="BioMuta" id="AP1M1"/>
<dbReference type="DMDM" id="18202738"/>
<dbReference type="jPOST" id="Q9BXS5"/>
<dbReference type="MassIVE" id="Q9BXS5"/>
<dbReference type="PaxDb" id="9606-ENSP00000388996"/>
<dbReference type="PeptideAtlas" id="Q9BXS5"/>
<dbReference type="ProteomicsDB" id="79492">
    <molecule id="Q9BXS5-1"/>
</dbReference>
<dbReference type="ProteomicsDB" id="79493">
    <molecule id="Q9BXS5-2"/>
</dbReference>
<dbReference type="Pumba" id="Q9BXS5"/>
<dbReference type="Antibodypedia" id="27330">
    <property type="antibodies" value="172 antibodies from 27 providers"/>
</dbReference>
<dbReference type="DNASU" id="8907"/>
<dbReference type="Ensembl" id="ENST00000291439.8">
    <molecule id="Q9BXS5-1"/>
    <property type="protein sequence ID" value="ENSP00000291439.2"/>
    <property type="gene ID" value="ENSG00000072958.9"/>
</dbReference>
<dbReference type="Ensembl" id="ENST00000444449.6">
    <molecule id="Q9BXS5-2"/>
    <property type="protein sequence ID" value="ENSP00000388996.1"/>
    <property type="gene ID" value="ENSG00000072958.9"/>
</dbReference>
<dbReference type="GeneID" id="8907"/>
<dbReference type="KEGG" id="hsa:8907"/>
<dbReference type="MANE-Select" id="ENST00000291439.8">
    <property type="protein sequence ID" value="ENSP00000291439.2"/>
    <property type="RefSeq nucleotide sequence ID" value="NM_032493.4"/>
    <property type="RefSeq protein sequence ID" value="NP_115882.1"/>
</dbReference>
<dbReference type="UCSC" id="uc002ndu.3">
    <molecule id="Q9BXS5-1"/>
    <property type="organism name" value="human"/>
</dbReference>
<dbReference type="AGR" id="HGNC:13667"/>
<dbReference type="CTD" id="8907"/>
<dbReference type="DisGeNET" id="8907"/>
<dbReference type="GeneCards" id="AP1M1"/>
<dbReference type="HGNC" id="HGNC:13667">
    <property type="gene designation" value="AP1M1"/>
</dbReference>
<dbReference type="HPA" id="ENSG00000072958">
    <property type="expression patterns" value="Low tissue specificity"/>
</dbReference>
<dbReference type="MIM" id="603535">
    <property type="type" value="gene"/>
</dbReference>
<dbReference type="neXtProt" id="NX_Q9BXS5"/>
<dbReference type="OpenTargets" id="ENSG00000072958"/>
<dbReference type="PharmGKB" id="PA24848"/>
<dbReference type="VEuPathDB" id="HostDB:ENSG00000072958"/>
<dbReference type="eggNOG" id="KOG0937">
    <property type="taxonomic scope" value="Eukaryota"/>
</dbReference>
<dbReference type="GeneTree" id="ENSGT00940000157924"/>
<dbReference type="InParanoid" id="Q9BXS5"/>
<dbReference type="OMA" id="KPLIWCD"/>
<dbReference type="OrthoDB" id="10259133at2759"/>
<dbReference type="PAN-GO" id="Q9BXS5">
    <property type="GO annotations" value="3 GO annotations based on evolutionary models"/>
</dbReference>
<dbReference type="PhylomeDB" id="Q9BXS5"/>
<dbReference type="TreeFam" id="TF300393"/>
<dbReference type="PathwayCommons" id="Q9BXS5"/>
<dbReference type="Reactome" id="R-HSA-164940">
    <property type="pathway name" value="Nef mediated downregulation of MHC class I complex cell surface expression"/>
</dbReference>
<dbReference type="Reactome" id="R-HSA-2132295">
    <property type="pathway name" value="MHC class II antigen presentation"/>
</dbReference>
<dbReference type="Reactome" id="R-HSA-432720">
    <property type="pathway name" value="Lysosome Vesicle Biogenesis"/>
</dbReference>
<dbReference type="Reactome" id="R-HSA-432722">
    <property type="pathway name" value="Golgi Associated Vesicle Biogenesis"/>
</dbReference>
<dbReference type="Reactome" id="R-HSA-6798695">
    <property type="pathway name" value="Neutrophil degranulation"/>
</dbReference>
<dbReference type="SignaLink" id="Q9BXS5"/>
<dbReference type="SIGNOR" id="Q9BXS5"/>
<dbReference type="BioGRID-ORCS" id="8907">
    <property type="hits" value="39 hits in 1158 CRISPR screens"/>
</dbReference>
<dbReference type="CD-CODE" id="FB4E32DD">
    <property type="entry name" value="Presynaptic clusters and postsynaptic densities"/>
</dbReference>
<dbReference type="ChiTaRS" id="AP1M1">
    <property type="organism name" value="human"/>
</dbReference>
<dbReference type="GeneWiki" id="AP1M1"/>
<dbReference type="GenomeRNAi" id="8907"/>
<dbReference type="Pharos" id="Q9BXS5">
    <property type="development level" value="Tbio"/>
</dbReference>
<dbReference type="PRO" id="PR:Q9BXS5"/>
<dbReference type="Proteomes" id="UP000005640">
    <property type="component" value="Chromosome 19"/>
</dbReference>
<dbReference type="RNAct" id="Q9BXS5">
    <property type="molecule type" value="protein"/>
</dbReference>
<dbReference type="Bgee" id="ENSG00000072958">
    <property type="expression patterns" value="Expressed in granulocyte and 180 other cell types or tissues"/>
</dbReference>
<dbReference type="ExpressionAtlas" id="Q9BXS5">
    <property type="expression patterns" value="baseline and differential"/>
</dbReference>
<dbReference type="GO" id="GO:0030121">
    <property type="term" value="C:AP-1 adaptor complex"/>
    <property type="evidence" value="ECO:0000303"/>
    <property type="project" value="ComplexPortal"/>
</dbReference>
<dbReference type="GO" id="GO:0030136">
    <property type="term" value="C:clathrin-coated vesicle"/>
    <property type="evidence" value="ECO:0000318"/>
    <property type="project" value="GO_Central"/>
</dbReference>
<dbReference type="GO" id="GO:0030659">
    <property type="term" value="C:cytoplasmic vesicle membrane"/>
    <property type="evidence" value="ECO:0000304"/>
    <property type="project" value="Reactome"/>
</dbReference>
<dbReference type="GO" id="GO:0005829">
    <property type="term" value="C:cytosol"/>
    <property type="evidence" value="ECO:0000314"/>
    <property type="project" value="HPA"/>
</dbReference>
<dbReference type="GO" id="GO:0005769">
    <property type="term" value="C:early endosome"/>
    <property type="evidence" value="ECO:0000303"/>
    <property type="project" value="ComplexPortal"/>
</dbReference>
<dbReference type="GO" id="GO:0070062">
    <property type="term" value="C:extracellular exosome"/>
    <property type="evidence" value="ECO:0007005"/>
    <property type="project" value="UniProtKB"/>
</dbReference>
<dbReference type="GO" id="GO:0000139">
    <property type="term" value="C:Golgi membrane"/>
    <property type="evidence" value="ECO:0000304"/>
    <property type="project" value="Reactome"/>
</dbReference>
<dbReference type="GO" id="GO:0043231">
    <property type="term" value="C:intracellular membrane-bounded organelle"/>
    <property type="evidence" value="ECO:0000314"/>
    <property type="project" value="HPA"/>
</dbReference>
<dbReference type="GO" id="GO:0005765">
    <property type="term" value="C:lysosomal membrane"/>
    <property type="evidence" value="ECO:0000304"/>
    <property type="project" value="Reactome"/>
</dbReference>
<dbReference type="GO" id="GO:0016020">
    <property type="term" value="C:membrane"/>
    <property type="evidence" value="ECO:0007005"/>
    <property type="project" value="UniProtKB"/>
</dbReference>
<dbReference type="GO" id="GO:0005886">
    <property type="term" value="C:plasma membrane"/>
    <property type="evidence" value="ECO:0000304"/>
    <property type="project" value="Reactome"/>
</dbReference>
<dbReference type="GO" id="GO:0035579">
    <property type="term" value="C:specific granule membrane"/>
    <property type="evidence" value="ECO:0000304"/>
    <property type="project" value="Reactome"/>
</dbReference>
<dbReference type="GO" id="GO:0045202">
    <property type="term" value="C:synapse"/>
    <property type="evidence" value="ECO:0007669"/>
    <property type="project" value="Ensembl"/>
</dbReference>
<dbReference type="GO" id="GO:0032588">
    <property type="term" value="C:trans-Golgi network membrane"/>
    <property type="evidence" value="ECO:0000304"/>
    <property type="project" value="Reactome"/>
</dbReference>
<dbReference type="GO" id="GO:0035615">
    <property type="term" value="F:clathrin adaptor activity"/>
    <property type="evidence" value="ECO:0000318"/>
    <property type="project" value="GO_Central"/>
</dbReference>
<dbReference type="GO" id="GO:0035646">
    <property type="term" value="P:endosome to melanosome transport"/>
    <property type="evidence" value="ECO:0000315"/>
    <property type="project" value="UniProtKB"/>
</dbReference>
<dbReference type="GO" id="GO:0006886">
    <property type="term" value="P:intracellular protein transport"/>
    <property type="evidence" value="ECO:0007669"/>
    <property type="project" value="InterPro"/>
</dbReference>
<dbReference type="GO" id="GO:1903232">
    <property type="term" value="P:melanosome assembly"/>
    <property type="evidence" value="ECO:0000303"/>
    <property type="project" value="ComplexPortal"/>
</dbReference>
<dbReference type="GO" id="GO:0032438">
    <property type="term" value="P:melanosome organization"/>
    <property type="evidence" value="ECO:0000315"/>
    <property type="project" value="UniProtKB"/>
</dbReference>
<dbReference type="GO" id="GO:0060155">
    <property type="term" value="P:platelet dense granule organization"/>
    <property type="evidence" value="ECO:0000303"/>
    <property type="project" value="ComplexPortal"/>
</dbReference>
<dbReference type="GO" id="GO:0016192">
    <property type="term" value="P:vesicle-mediated transport"/>
    <property type="evidence" value="ECO:0000318"/>
    <property type="project" value="GO_Central"/>
</dbReference>
<dbReference type="CDD" id="cd09258">
    <property type="entry name" value="AP-1_Mu1A_Cterm"/>
    <property type="match status" value="1"/>
</dbReference>
<dbReference type="CDD" id="cd14835">
    <property type="entry name" value="AP1_Mu_N"/>
    <property type="match status" value="1"/>
</dbReference>
<dbReference type="FunFam" id="2.60.40.1170:FF:000002">
    <property type="entry name" value="AP-1 complex subunit mu-1 isoform 1"/>
    <property type="match status" value="1"/>
</dbReference>
<dbReference type="FunFam" id="3.30.450.60:FF:000006">
    <property type="entry name" value="AP-1 complex subunit mu-1 isoform 1"/>
    <property type="match status" value="1"/>
</dbReference>
<dbReference type="Gene3D" id="3.30.450.60">
    <property type="match status" value="1"/>
</dbReference>
<dbReference type="Gene3D" id="2.60.40.1170">
    <property type="entry name" value="Mu homology domain, subdomain B"/>
    <property type="match status" value="2"/>
</dbReference>
<dbReference type="InterPro" id="IPR050431">
    <property type="entry name" value="Adaptor_comp_med_subunit"/>
</dbReference>
<dbReference type="InterPro" id="IPR036168">
    <property type="entry name" value="AP2_Mu_C_sf"/>
</dbReference>
<dbReference type="InterPro" id="IPR022775">
    <property type="entry name" value="AP_mu_sigma_su"/>
</dbReference>
<dbReference type="InterPro" id="IPR001392">
    <property type="entry name" value="Clathrin_mu"/>
</dbReference>
<dbReference type="InterPro" id="IPR018240">
    <property type="entry name" value="Clathrin_mu_CS"/>
</dbReference>
<dbReference type="InterPro" id="IPR011012">
    <property type="entry name" value="Longin-like_dom_sf"/>
</dbReference>
<dbReference type="InterPro" id="IPR028565">
    <property type="entry name" value="MHD"/>
</dbReference>
<dbReference type="PANTHER" id="PTHR10529">
    <property type="entry name" value="AP COMPLEX SUBUNIT MU"/>
    <property type="match status" value="1"/>
</dbReference>
<dbReference type="Pfam" id="PF00928">
    <property type="entry name" value="Adap_comp_sub"/>
    <property type="match status" value="1"/>
</dbReference>
<dbReference type="Pfam" id="PF01217">
    <property type="entry name" value="Clat_adaptor_s"/>
    <property type="match status" value="1"/>
</dbReference>
<dbReference type="PIRSF" id="PIRSF005992">
    <property type="entry name" value="Clathrin_mu"/>
    <property type="match status" value="1"/>
</dbReference>
<dbReference type="PRINTS" id="PR00314">
    <property type="entry name" value="CLATHRINADPT"/>
</dbReference>
<dbReference type="SUPFAM" id="SSF49447">
    <property type="entry name" value="Second domain of Mu2 adaptin subunit (ap50) of ap2 adaptor"/>
    <property type="match status" value="1"/>
</dbReference>
<dbReference type="SUPFAM" id="SSF64356">
    <property type="entry name" value="SNARE-like"/>
    <property type="match status" value="1"/>
</dbReference>
<dbReference type="PROSITE" id="PS00990">
    <property type="entry name" value="CLAT_ADAPTOR_M_1"/>
    <property type="match status" value="1"/>
</dbReference>
<dbReference type="PROSITE" id="PS00991">
    <property type="entry name" value="CLAT_ADAPTOR_M_2"/>
    <property type="match status" value="1"/>
</dbReference>
<dbReference type="PROSITE" id="PS51072">
    <property type="entry name" value="MHD"/>
    <property type="match status" value="1"/>
</dbReference>
<reference key="1">
    <citation type="submission" date="2000-07" db="EMBL/GenBank/DDBJ databases">
        <title>Human clathrin-associated protein AP47 mRNA.</title>
        <authorList>
            <person name="Qu X."/>
            <person name="Zhai Y."/>
            <person name="Zhang C."/>
            <person name="Yu Y."/>
            <person name="Xing G."/>
            <person name="Wei H."/>
            <person name="Wu S."/>
            <person name="Zhou G."/>
            <person name="He F."/>
        </authorList>
    </citation>
    <scope>NUCLEOTIDE SEQUENCE [MRNA] (ISOFORM 1)</scope>
    <source>
        <tissue>Liver</tissue>
    </source>
</reference>
<reference key="2">
    <citation type="submission" date="2005-05" db="EMBL/GenBank/DDBJ databases">
        <authorList>
            <person name="Zhang H.-T."/>
            <person name="Burakoff S.J."/>
            <person name="Jin Y.-J."/>
        </authorList>
    </citation>
    <scope>NUCLEOTIDE SEQUENCE [MRNA] (ISOFORM 2)</scope>
    <source>
        <tissue>T-cell</tissue>
    </source>
</reference>
<reference key="3">
    <citation type="journal article" date="2004" name="Nature">
        <title>The DNA sequence and biology of human chromosome 19.</title>
        <authorList>
            <person name="Grimwood J."/>
            <person name="Gordon L.A."/>
            <person name="Olsen A.S."/>
            <person name="Terry A."/>
            <person name="Schmutz J."/>
            <person name="Lamerdin J.E."/>
            <person name="Hellsten U."/>
            <person name="Goodstein D."/>
            <person name="Couronne O."/>
            <person name="Tran-Gyamfi M."/>
            <person name="Aerts A."/>
            <person name="Altherr M."/>
            <person name="Ashworth L."/>
            <person name="Bajorek E."/>
            <person name="Black S."/>
            <person name="Branscomb E."/>
            <person name="Caenepeel S."/>
            <person name="Carrano A.V."/>
            <person name="Caoile C."/>
            <person name="Chan Y.M."/>
            <person name="Christensen M."/>
            <person name="Cleland C.A."/>
            <person name="Copeland A."/>
            <person name="Dalin E."/>
            <person name="Dehal P."/>
            <person name="Denys M."/>
            <person name="Detter J.C."/>
            <person name="Escobar J."/>
            <person name="Flowers D."/>
            <person name="Fotopulos D."/>
            <person name="Garcia C."/>
            <person name="Georgescu A.M."/>
            <person name="Glavina T."/>
            <person name="Gomez M."/>
            <person name="Gonzales E."/>
            <person name="Groza M."/>
            <person name="Hammon N."/>
            <person name="Hawkins T."/>
            <person name="Haydu L."/>
            <person name="Ho I."/>
            <person name="Huang W."/>
            <person name="Israni S."/>
            <person name="Jett J."/>
            <person name="Kadner K."/>
            <person name="Kimball H."/>
            <person name="Kobayashi A."/>
            <person name="Larionov V."/>
            <person name="Leem S.-H."/>
            <person name="Lopez F."/>
            <person name="Lou Y."/>
            <person name="Lowry S."/>
            <person name="Malfatti S."/>
            <person name="Martinez D."/>
            <person name="McCready P.M."/>
            <person name="Medina C."/>
            <person name="Morgan J."/>
            <person name="Nelson K."/>
            <person name="Nolan M."/>
            <person name="Ovcharenko I."/>
            <person name="Pitluck S."/>
            <person name="Pollard M."/>
            <person name="Popkie A.P."/>
            <person name="Predki P."/>
            <person name="Quan G."/>
            <person name="Ramirez L."/>
            <person name="Rash S."/>
            <person name="Retterer J."/>
            <person name="Rodriguez A."/>
            <person name="Rogers S."/>
            <person name="Salamov A."/>
            <person name="Salazar A."/>
            <person name="She X."/>
            <person name="Smith D."/>
            <person name="Slezak T."/>
            <person name="Solovyev V."/>
            <person name="Thayer N."/>
            <person name="Tice H."/>
            <person name="Tsai M."/>
            <person name="Ustaszewska A."/>
            <person name="Vo N."/>
            <person name="Wagner M."/>
            <person name="Wheeler J."/>
            <person name="Wu K."/>
            <person name="Xie G."/>
            <person name="Yang J."/>
            <person name="Dubchak I."/>
            <person name="Furey T.S."/>
            <person name="DeJong P."/>
            <person name="Dickson M."/>
            <person name="Gordon D."/>
            <person name="Eichler E.E."/>
            <person name="Pennacchio L.A."/>
            <person name="Richardson P."/>
            <person name="Stubbs L."/>
            <person name="Rokhsar D.S."/>
            <person name="Myers R.M."/>
            <person name="Rubin E.M."/>
            <person name="Lucas S.M."/>
        </authorList>
    </citation>
    <scope>NUCLEOTIDE SEQUENCE [LARGE SCALE GENOMIC DNA]</scope>
</reference>
<reference key="4">
    <citation type="journal article" date="2004" name="Genome Res.">
        <title>The status, quality, and expansion of the NIH full-length cDNA project: the Mammalian Gene Collection (MGC).</title>
        <authorList>
            <consortium name="The MGC Project Team"/>
        </authorList>
    </citation>
    <scope>NUCLEOTIDE SEQUENCE [LARGE SCALE MRNA] (ISOFORM 1)</scope>
    <source>
        <tissue>Uterus</tissue>
    </source>
</reference>
<reference key="5">
    <citation type="submission" date="2006-01" db="UniProtKB">
        <authorList>
            <person name="Bienvenut W.V."/>
            <person name="Claeys D."/>
        </authorList>
    </citation>
    <scope>PROTEIN SEQUENCE OF 2-12; 41-56; 87-96; 130-160; 202-211; 218-225; 380-393 AND 401-421</scope>
    <scope>CLEAVAGE OF INITIATOR METHIONINE</scope>
    <scope>ACETYLATION AT SER-2</scope>
    <scope>IDENTIFICATION BY MASS SPECTROMETRY</scope>
    <source>
        <tissue>Platelet</tissue>
    </source>
</reference>
<reference key="6">
    <citation type="journal article" date="2011" name="BMC Syst. Biol.">
        <title>Initial characterization of the human central proteome.</title>
        <authorList>
            <person name="Burkard T.R."/>
            <person name="Planyavsky M."/>
            <person name="Kaupe I."/>
            <person name="Breitwieser F.P."/>
            <person name="Buerckstuemmer T."/>
            <person name="Bennett K.L."/>
            <person name="Superti-Furga G."/>
            <person name="Colinge J."/>
        </authorList>
    </citation>
    <scope>IDENTIFICATION BY MASS SPECTROMETRY [LARGE SCALE ANALYSIS]</scope>
</reference>
<reference key="7">
    <citation type="journal article" date="2012" name="Mol. Cell. Proteomics">
        <title>Comparative large-scale characterisation of plant vs. mammal proteins reveals similar and idiosyncratic N-alpha acetylation features.</title>
        <authorList>
            <person name="Bienvenut W.V."/>
            <person name="Sumpton D."/>
            <person name="Martinez A."/>
            <person name="Lilla S."/>
            <person name="Espagne C."/>
            <person name="Meinnel T."/>
            <person name="Giglione C."/>
        </authorList>
    </citation>
    <scope>ACETYLATION [LARGE SCALE ANALYSIS] AT SER-2</scope>
    <scope>CLEAVAGE OF INITIATOR METHIONINE [LARGE SCALE ANALYSIS]</scope>
    <scope>IDENTIFICATION BY MASS SPECTROMETRY [LARGE SCALE ANALYSIS]</scope>
</reference>
<reference key="8">
    <citation type="journal article" date="2013" name="J. Proteome Res.">
        <title>Toward a comprehensive characterization of a human cancer cell phosphoproteome.</title>
        <authorList>
            <person name="Zhou H."/>
            <person name="Di Palma S."/>
            <person name="Preisinger C."/>
            <person name="Peng M."/>
            <person name="Polat A.N."/>
            <person name="Heck A.J."/>
            <person name="Mohammed S."/>
        </authorList>
    </citation>
    <scope>PHOSPHORYLATION [LARGE SCALE ANALYSIS] AT THR-152 AND THR-154</scope>
    <scope>IDENTIFICATION BY MASS SPECTROMETRY [LARGE SCALE ANALYSIS]</scope>
    <source>
        <tissue>Cervix carcinoma</tissue>
        <tissue>Erythroleukemia</tissue>
    </source>
</reference>
<reference key="9">
    <citation type="journal article" date="2014" name="J. Proteomics">
        <title>An enzyme assisted RP-RPLC approach for in-depth analysis of human liver phosphoproteome.</title>
        <authorList>
            <person name="Bian Y."/>
            <person name="Song C."/>
            <person name="Cheng K."/>
            <person name="Dong M."/>
            <person name="Wang F."/>
            <person name="Huang J."/>
            <person name="Sun D."/>
            <person name="Wang L."/>
            <person name="Ye M."/>
            <person name="Zou H."/>
        </authorList>
    </citation>
    <scope>PHOSPHORYLATION [LARGE SCALE ANALYSIS] AT THR-154</scope>
    <scope>IDENTIFICATION BY MASS SPECTROMETRY [LARGE SCALE ANALYSIS]</scope>
    <source>
        <tissue>Liver</tissue>
    </source>
</reference>
<reference key="10">
    <citation type="journal article" date="2006" name="Science">
        <title>The consensus coding sequences of human breast and colorectal cancers.</title>
        <authorList>
            <person name="Sjoeblom T."/>
            <person name="Jones S."/>
            <person name="Wood L.D."/>
            <person name="Parsons D.W."/>
            <person name="Lin J."/>
            <person name="Barber T.D."/>
            <person name="Mandelker D."/>
            <person name="Leary R.J."/>
            <person name="Ptak J."/>
            <person name="Silliman N."/>
            <person name="Szabo S."/>
            <person name="Buckhaults P."/>
            <person name="Farrell C."/>
            <person name="Meeh P."/>
            <person name="Markowitz S.D."/>
            <person name="Willis J."/>
            <person name="Dawson D."/>
            <person name="Willson J.K.V."/>
            <person name="Gazdar A.F."/>
            <person name="Hartigan J."/>
            <person name="Wu L."/>
            <person name="Liu C."/>
            <person name="Parmigiani G."/>
            <person name="Park B.H."/>
            <person name="Bachman K.E."/>
            <person name="Papadopoulos N."/>
            <person name="Vogelstein B."/>
            <person name="Kinzler K.W."/>
            <person name="Velculescu V.E."/>
        </authorList>
    </citation>
    <scope>VARIANT [LARGE SCALE ANALYSIS] GLN-303</scope>
</reference>
<reference key="11">
    <citation type="journal article" date="2008" name="J. Biol. Chem.">
        <title>The tyrosine binding pocket in the adaptor protein 1 (AP-1) mu1 subunit is necessary for Nef to recruit AP-1 to the major histocompatibility complex class I cytoplasmic tail.</title>
        <authorList>
            <person name="Wonderlich E.R."/>
            <person name="Williams M."/>
            <person name="Collins K.L."/>
        </authorList>
    </citation>
    <scope>IDENTIFICATION IN A AP1(MU)-NEF-MHC-I COMPLEX</scope>
    <scope>INTERACTION WITH HIV-1 PROTEIN NEF (MICROBIAL INFECTION)</scope>
</reference>
<accession>Q9BXS5</accession>
<accession>Q4TTY5</accession>
<feature type="initiator methionine" description="Removed" evidence="6 9">
    <location>
        <position position="1"/>
    </location>
</feature>
<feature type="chain" id="PRO_0000193770" description="AP-1 complex subunit mu-1">
    <location>
        <begin position="2"/>
        <end position="423"/>
    </location>
</feature>
<feature type="domain" description="MHD" evidence="3">
    <location>
        <begin position="168"/>
        <end position="421"/>
    </location>
</feature>
<feature type="modified residue" description="N-acetylserine" evidence="6 9">
    <location>
        <position position="2"/>
    </location>
</feature>
<feature type="modified residue" description="Phosphothreonine" evidence="10">
    <location>
        <position position="152"/>
    </location>
</feature>
<feature type="modified residue" description="Phosphothreonine" evidence="10 11">
    <location>
        <position position="154"/>
    </location>
</feature>
<feature type="modified residue" description="Phosphothreonine" evidence="2">
    <location>
        <position position="223"/>
    </location>
</feature>
<feature type="splice variant" id="VSP_042542" description="In isoform 2." evidence="7">
    <original>L</original>
    <variation>LGKYPGVGWLGHT</variation>
    <location>
        <position position="182"/>
    </location>
</feature>
<feature type="sequence variant" id="VAR_036536" description="In a breast cancer sample; somatic mutation; dbSNP:rs999036825." evidence="4">
    <original>R</original>
    <variation>Q</variation>
    <location>
        <position position="303"/>
    </location>
</feature>
<evidence type="ECO:0000250" key="1"/>
<evidence type="ECO:0000250" key="2">
    <source>
        <dbReference type="UniProtKB" id="Q32Q06"/>
    </source>
</evidence>
<evidence type="ECO:0000255" key="3">
    <source>
        <dbReference type="PROSITE-ProRule" id="PRU00404"/>
    </source>
</evidence>
<evidence type="ECO:0000269" key="4">
    <source>
    </source>
</evidence>
<evidence type="ECO:0000269" key="5">
    <source>
    </source>
</evidence>
<evidence type="ECO:0000269" key="6">
    <source ref="5"/>
</evidence>
<evidence type="ECO:0000303" key="7">
    <source ref="2"/>
</evidence>
<evidence type="ECO:0000305" key="8"/>
<evidence type="ECO:0007744" key="9">
    <source>
    </source>
</evidence>
<evidence type="ECO:0007744" key="10">
    <source>
    </source>
</evidence>
<evidence type="ECO:0007744" key="11">
    <source>
    </source>
</evidence>
<proteinExistence type="evidence at protein level"/>